<evidence type="ECO:0000255" key="1">
    <source>
        <dbReference type="HAMAP-Rule" id="MF_00815"/>
    </source>
</evidence>
<protein>
    <recommendedName>
        <fullName evidence="1">ATP synthase gamma chain</fullName>
    </recommendedName>
    <alternativeName>
        <fullName evidence="1">ATP synthase F1 sector gamma subunit</fullName>
    </alternativeName>
    <alternativeName>
        <fullName evidence="1">F-ATPase gamma subunit</fullName>
    </alternativeName>
</protein>
<accession>A5IUP9</accession>
<name>ATPG_STAA9</name>
<proteinExistence type="inferred from homology"/>
<sequence length="288" mass="32106">MASLKEIDTRIKSTKKMKQITKAMNMVSSSKLRRAEKNTKQFTPYMDKMQDAITAVAGASSNTNHPMLRPRKITRSGYLVITSDKGLAGAYSANVLKKLITDIEAKHQDSSEYSIVVLGQQGVDFLKNRGYDIEYSQVDVPDQPSFKSVQALANHAIDLYSEEEIDELNIYYSHYVSVLENKPTSRQVLPLSQEDSSKGHGHLSSYEFEPDKESILSVILPQYVESLIYGTILDAKASEHATRMTAMKNATDNATELIDDLSLEYNRARQAEITQQITEIVGGSAALE</sequence>
<gene>
    <name evidence="1" type="primary">atpG</name>
    <name type="ordered locus">SaurJH9_2140</name>
</gene>
<comment type="function">
    <text evidence="1">Produces ATP from ADP in the presence of a proton gradient across the membrane. The gamma chain is believed to be important in regulating ATPase activity and the flow of protons through the CF(0) complex.</text>
</comment>
<comment type="subunit">
    <text evidence="1">F-type ATPases have 2 components, CF(1) - the catalytic core - and CF(0) - the membrane proton channel. CF(1) has five subunits: alpha(3), beta(3), gamma(1), delta(1), epsilon(1). CF(0) has three main subunits: a, b and c.</text>
</comment>
<comment type="subcellular location">
    <subcellularLocation>
        <location evidence="1">Cell membrane</location>
        <topology evidence="1">Peripheral membrane protein</topology>
    </subcellularLocation>
</comment>
<comment type="similarity">
    <text evidence="1">Belongs to the ATPase gamma chain family.</text>
</comment>
<reference key="1">
    <citation type="submission" date="2007-05" db="EMBL/GenBank/DDBJ databases">
        <title>Complete sequence of chromosome of Staphylococcus aureus subsp. aureus JH9.</title>
        <authorList>
            <consortium name="US DOE Joint Genome Institute"/>
            <person name="Copeland A."/>
            <person name="Lucas S."/>
            <person name="Lapidus A."/>
            <person name="Barry K."/>
            <person name="Detter J.C."/>
            <person name="Glavina del Rio T."/>
            <person name="Hammon N."/>
            <person name="Israni S."/>
            <person name="Pitluck S."/>
            <person name="Chain P."/>
            <person name="Malfatti S."/>
            <person name="Shin M."/>
            <person name="Vergez L."/>
            <person name="Schmutz J."/>
            <person name="Larimer F."/>
            <person name="Land M."/>
            <person name="Hauser L."/>
            <person name="Kyrpides N."/>
            <person name="Kim E."/>
            <person name="Tomasz A."/>
            <person name="Richardson P."/>
        </authorList>
    </citation>
    <scope>NUCLEOTIDE SEQUENCE [LARGE SCALE GENOMIC DNA]</scope>
    <source>
        <strain>JH9</strain>
    </source>
</reference>
<dbReference type="EMBL" id="CP000703">
    <property type="protein sequence ID" value="ABQ49922.1"/>
    <property type="molecule type" value="Genomic_DNA"/>
</dbReference>
<dbReference type="RefSeq" id="WP_000157603.1">
    <property type="nucleotide sequence ID" value="NC_009487.1"/>
</dbReference>
<dbReference type="SMR" id="A5IUP9"/>
<dbReference type="GeneID" id="98346411"/>
<dbReference type="KEGG" id="saj:SaurJH9_2140"/>
<dbReference type="HOGENOM" id="CLU_050669_0_1_9"/>
<dbReference type="GO" id="GO:0005886">
    <property type="term" value="C:plasma membrane"/>
    <property type="evidence" value="ECO:0007669"/>
    <property type="project" value="UniProtKB-SubCell"/>
</dbReference>
<dbReference type="GO" id="GO:0045259">
    <property type="term" value="C:proton-transporting ATP synthase complex"/>
    <property type="evidence" value="ECO:0007669"/>
    <property type="project" value="UniProtKB-KW"/>
</dbReference>
<dbReference type="GO" id="GO:0005524">
    <property type="term" value="F:ATP binding"/>
    <property type="evidence" value="ECO:0007669"/>
    <property type="project" value="UniProtKB-UniRule"/>
</dbReference>
<dbReference type="GO" id="GO:0046933">
    <property type="term" value="F:proton-transporting ATP synthase activity, rotational mechanism"/>
    <property type="evidence" value="ECO:0007669"/>
    <property type="project" value="UniProtKB-UniRule"/>
</dbReference>
<dbReference type="GO" id="GO:0042777">
    <property type="term" value="P:proton motive force-driven plasma membrane ATP synthesis"/>
    <property type="evidence" value="ECO:0007669"/>
    <property type="project" value="UniProtKB-UniRule"/>
</dbReference>
<dbReference type="CDD" id="cd12151">
    <property type="entry name" value="F1-ATPase_gamma"/>
    <property type="match status" value="1"/>
</dbReference>
<dbReference type="FunFam" id="1.10.287.80:FF:000019">
    <property type="entry name" value="ATP synthase gamma chain"/>
    <property type="match status" value="1"/>
</dbReference>
<dbReference type="FunFam" id="3.40.1380.10:FF:000002">
    <property type="entry name" value="ATP synthase gamma chain"/>
    <property type="match status" value="1"/>
</dbReference>
<dbReference type="Gene3D" id="3.40.1380.10">
    <property type="match status" value="1"/>
</dbReference>
<dbReference type="Gene3D" id="1.10.287.80">
    <property type="entry name" value="ATP synthase, gamma subunit, helix hairpin domain"/>
    <property type="match status" value="1"/>
</dbReference>
<dbReference type="HAMAP" id="MF_00815">
    <property type="entry name" value="ATP_synth_gamma_bact"/>
    <property type="match status" value="1"/>
</dbReference>
<dbReference type="InterPro" id="IPR035968">
    <property type="entry name" value="ATP_synth_F1_ATPase_gsu"/>
</dbReference>
<dbReference type="InterPro" id="IPR000131">
    <property type="entry name" value="ATP_synth_F1_gsu"/>
</dbReference>
<dbReference type="NCBIfam" id="TIGR01146">
    <property type="entry name" value="ATPsyn_F1gamma"/>
    <property type="match status" value="1"/>
</dbReference>
<dbReference type="PANTHER" id="PTHR11693">
    <property type="entry name" value="ATP SYNTHASE GAMMA CHAIN"/>
    <property type="match status" value="1"/>
</dbReference>
<dbReference type="PANTHER" id="PTHR11693:SF22">
    <property type="entry name" value="ATP SYNTHASE SUBUNIT GAMMA, MITOCHONDRIAL"/>
    <property type="match status" value="1"/>
</dbReference>
<dbReference type="Pfam" id="PF00231">
    <property type="entry name" value="ATP-synt"/>
    <property type="match status" value="1"/>
</dbReference>
<dbReference type="PRINTS" id="PR00126">
    <property type="entry name" value="ATPASEGAMMA"/>
</dbReference>
<dbReference type="SUPFAM" id="SSF52943">
    <property type="entry name" value="ATP synthase (F1-ATPase), gamma subunit"/>
    <property type="match status" value="1"/>
</dbReference>
<feature type="chain" id="PRO_1000083814" description="ATP synthase gamma chain">
    <location>
        <begin position="1"/>
        <end position="288"/>
    </location>
</feature>
<keyword id="KW-0066">ATP synthesis</keyword>
<keyword id="KW-1003">Cell membrane</keyword>
<keyword id="KW-0139">CF(1)</keyword>
<keyword id="KW-0375">Hydrogen ion transport</keyword>
<keyword id="KW-0406">Ion transport</keyword>
<keyword id="KW-0472">Membrane</keyword>
<keyword id="KW-0813">Transport</keyword>
<organism>
    <name type="scientific">Staphylococcus aureus (strain JH9)</name>
    <dbReference type="NCBI Taxonomy" id="359786"/>
    <lineage>
        <taxon>Bacteria</taxon>
        <taxon>Bacillati</taxon>
        <taxon>Bacillota</taxon>
        <taxon>Bacilli</taxon>
        <taxon>Bacillales</taxon>
        <taxon>Staphylococcaceae</taxon>
        <taxon>Staphylococcus</taxon>
    </lineage>
</organism>